<keyword id="KW-1185">Reference proteome</keyword>
<keyword id="KW-0687">Ribonucleoprotein</keyword>
<keyword id="KW-0689">Ribosomal protein</keyword>
<keyword id="KW-0694">RNA-binding</keyword>
<keyword id="KW-0699">rRNA-binding</keyword>
<keyword id="KW-0820">tRNA-binding</keyword>
<evidence type="ECO:0000255" key="1">
    <source>
        <dbReference type="HAMAP-Rule" id="MF_00403"/>
    </source>
</evidence>
<evidence type="ECO:0000256" key="2">
    <source>
        <dbReference type="SAM" id="MobiDB-lite"/>
    </source>
</evidence>
<evidence type="ECO:0000305" key="3"/>
<dbReference type="EMBL" id="AJ749949">
    <property type="protein sequence ID" value="CAG44954.1"/>
    <property type="molecule type" value="Genomic_DNA"/>
</dbReference>
<dbReference type="RefSeq" id="WP_003014323.1">
    <property type="nucleotide sequence ID" value="NZ_CP010290.1"/>
</dbReference>
<dbReference type="RefSeq" id="YP_169370.1">
    <property type="nucleotide sequence ID" value="NC_006570.2"/>
</dbReference>
<dbReference type="SMR" id="Q5NHX2"/>
<dbReference type="STRING" id="177416.FTT_0321"/>
<dbReference type="DNASU" id="3191538"/>
<dbReference type="EnsemblBacteria" id="CAG44954">
    <property type="protein sequence ID" value="CAG44954"/>
    <property type="gene ID" value="FTT_0321"/>
</dbReference>
<dbReference type="KEGG" id="ftu:FTT_0321"/>
<dbReference type="eggNOG" id="COG0048">
    <property type="taxonomic scope" value="Bacteria"/>
</dbReference>
<dbReference type="OrthoDB" id="9802366at2"/>
<dbReference type="Proteomes" id="UP000001174">
    <property type="component" value="Chromosome"/>
</dbReference>
<dbReference type="GO" id="GO:0015935">
    <property type="term" value="C:small ribosomal subunit"/>
    <property type="evidence" value="ECO:0007669"/>
    <property type="project" value="InterPro"/>
</dbReference>
<dbReference type="GO" id="GO:0019843">
    <property type="term" value="F:rRNA binding"/>
    <property type="evidence" value="ECO:0007669"/>
    <property type="project" value="UniProtKB-UniRule"/>
</dbReference>
<dbReference type="GO" id="GO:0003735">
    <property type="term" value="F:structural constituent of ribosome"/>
    <property type="evidence" value="ECO:0007669"/>
    <property type="project" value="InterPro"/>
</dbReference>
<dbReference type="GO" id="GO:0000049">
    <property type="term" value="F:tRNA binding"/>
    <property type="evidence" value="ECO:0007669"/>
    <property type="project" value="UniProtKB-UniRule"/>
</dbReference>
<dbReference type="GO" id="GO:0006412">
    <property type="term" value="P:translation"/>
    <property type="evidence" value="ECO:0007669"/>
    <property type="project" value="UniProtKB-UniRule"/>
</dbReference>
<dbReference type="CDD" id="cd03368">
    <property type="entry name" value="Ribosomal_S12"/>
    <property type="match status" value="1"/>
</dbReference>
<dbReference type="FunFam" id="2.40.50.140:FF:000001">
    <property type="entry name" value="30S ribosomal protein S12"/>
    <property type="match status" value="1"/>
</dbReference>
<dbReference type="Gene3D" id="2.40.50.140">
    <property type="entry name" value="Nucleic acid-binding proteins"/>
    <property type="match status" value="1"/>
</dbReference>
<dbReference type="HAMAP" id="MF_00403_B">
    <property type="entry name" value="Ribosomal_uS12_B"/>
    <property type="match status" value="1"/>
</dbReference>
<dbReference type="InterPro" id="IPR012340">
    <property type="entry name" value="NA-bd_OB-fold"/>
</dbReference>
<dbReference type="InterPro" id="IPR006032">
    <property type="entry name" value="Ribosomal_uS12"/>
</dbReference>
<dbReference type="InterPro" id="IPR005679">
    <property type="entry name" value="Ribosomal_uS12_bac"/>
</dbReference>
<dbReference type="NCBIfam" id="TIGR00981">
    <property type="entry name" value="rpsL_bact"/>
    <property type="match status" value="1"/>
</dbReference>
<dbReference type="PANTHER" id="PTHR11652">
    <property type="entry name" value="30S RIBOSOMAL PROTEIN S12 FAMILY MEMBER"/>
    <property type="match status" value="1"/>
</dbReference>
<dbReference type="Pfam" id="PF00164">
    <property type="entry name" value="Ribosom_S12_S23"/>
    <property type="match status" value="1"/>
</dbReference>
<dbReference type="PIRSF" id="PIRSF002133">
    <property type="entry name" value="Ribosomal_S12/S23"/>
    <property type="match status" value="1"/>
</dbReference>
<dbReference type="PRINTS" id="PR01034">
    <property type="entry name" value="RIBOSOMALS12"/>
</dbReference>
<dbReference type="SUPFAM" id="SSF50249">
    <property type="entry name" value="Nucleic acid-binding proteins"/>
    <property type="match status" value="1"/>
</dbReference>
<dbReference type="PROSITE" id="PS00055">
    <property type="entry name" value="RIBOSOMAL_S12"/>
    <property type="match status" value="1"/>
</dbReference>
<name>RS12_FRATT</name>
<proteinExistence type="inferred from homology"/>
<accession>Q5NHX2</accession>
<comment type="function">
    <text evidence="1">With S4 and S5 plays an important role in translational accuracy.</text>
</comment>
<comment type="function">
    <text evidence="1">Interacts with and stabilizes bases of the 16S rRNA that are involved in tRNA selection in the A site and with the mRNA backbone. Located at the interface of the 30S and 50S subunits, it traverses the body of the 30S subunit contacting proteins on the other side and probably holding the rRNA structure together. The combined cluster of proteins S8, S12 and S17 appears to hold together the shoulder and platform of the 30S subunit.</text>
</comment>
<comment type="subunit">
    <text evidence="1">Part of the 30S ribosomal subunit. Contacts proteins S8 and S17. May interact with IF1 in the 30S initiation complex.</text>
</comment>
<comment type="similarity">
    <text evidence="1">Belongs to the universal ribosomal protein uS12 family.</text>
</comment>
<comment type="caution">
    <text evidence="3">Because the enzyme that would modify Asp-89 to 3-methylthioaspartic acid has not been found in the proteome of this organism, that modification is not predicted.</text>
</comment>
<gene>
    <name evidence="1" type="primary">rpsL</name>
    <name type="ordered locus">FTT_0321</name>
</gene>
<feature type="chain" id="PRO_0000146226" description="Small ribosomal subunit protein uS12">
    <location>
        <begin position="1"/>
        <end position="124"/>
    </location>
</feature>
<feature type="region of interest" description="Disordered" evidence="2">
    <location>
        <begin position="102"/>
        <end position="124"/>
    </location>
</feature>
<feature type="compositionally biased region" description="Basic residues" evidence="2">
    <location>
        <begin position="109"/>
        <end position="124"/>
    </location>
</feature>
<sequence length="124" mass="13814">MATINQLVNNPRKRSVVKSKVPALKACPQRRGVCTRVYTTTPKKPNSALRKVARVRLTSRFEVTSYIGGEGHNLQEHSVVLIRGGRVKDLPGVRYHIVRGALDTSGVNNRKHGRSKYGTKRPKS</sequence>
<organism>
    <name type="scientific">Francisella tularensis subsp. tularensis (strain SCHU S4 / Schu 4)</name>
    <dbReference type="NCBI Taxonomy" id="177416"/>
    <lineage>
        <taxon>Bacteria</taxon>
        <taxon>Pseudomonadati</taxon>
        <taxon>Pseudomonadota</taxon>
        <taxon>Gammaproteobacteria</taxon>
        <taxon>Thiotrichales</taxon>
        <taxon>Francisellaceae</taxon>
        <taxon>Francisella</taxon>
    </lineage>
</organism>
<reference key="1">
    <citation type="journal article" date="2005" name="Nat. Genet.">
        <title>The complete genome sequence of Francisella tularensis, the causative agent of tularemia.</title>
        <authorList>
            <person name="Larsson P."/>
            <person name="Oyston P.C.F."/>
            <person name="Chain P."/>
            <person name="Chu M.C."/>
            <person name="Duffield M."/>
            <person name="Fuxelius H.-H."/>
            <person name="Garcia E."/>
            <person name="Haelltorp G."/>
            <person name="Johansson D."/>
            <person name="Isherwood K.E."/>
            <person name="Karp P.D."/>
            <person name="Larsson E."/>
            <person name="Liu Y."/>
            <person name="Michell S."/>
            <person name="Prior J."/>
            <person name="Prior R."/>
            <person name="Malfatti S."/>
            <person name="Sjoestedt A."/>
            <person name="Svensson K."/>
            <person name="Thompson N."/>
            <person name="Vergez L."/>
            <person name="Wagg J.K."/>
            <person name="Wren B.W."/>
            <person name="Lindler L.E."/>
            <person name="Andersson S.G.E."/>
            <person name="Forsman M."/>
            <person name="Titball R.W."/>
        </authorList>
    </citation>
    <scope>NUCLEOTIDE SEQUENCE [LARGE SCALE GENOMIC DNA]</scope>
    <source>
        <strain>SCHU S4 / Schu 4</strain>
    </source>
</reference>
<protein>
    <recommendedName>
        <fullName evidence="1">Small ribosomal subunit protein uS12</fullName>
    </recommendedName>
    <alternativeName>
        <fullName evidence="3">30S ribosomal protein S12</fullName>
    </alternativeName>
</protein>